<dbReference type="EMBL" id="CP000880">
    <property type="protein sequence ID" value="ABX20276.1"/>
    <property type="molecule type" value="Genomic_DNA"/>
</dbReference>
<dbReference type="SMR" id="A9MHJ8"/>
<dbReference type="STRING" id="41514.SARI_00337"/>
<dbReference type="KEGG" id="ses:SARI_00337"/>
<dbReference type="HOGENOM" id="CLU_005965_2_1_6"/>
<dbReference type="Proteomes" id="UP000002084">
    <property type="component" value="Chromosome"/>
</dbReference>
<dbReference type="GO" id="GO:0005524">
    <property type="term" value="F:ATP binding"/>
    <property type="evidence" value="ECO:0007669"/>
    <property type="project" value="UniProtKB-KW"/>
</dbReference>
<dbReference type="GO" id="GO:0016887">
    <property type="term" value="F:ATP hydrolysis activity"/>
    <property type="evidence" value="ECO:0007669"/>
    <property type="project" value="UniProtKB-UniRule"/>
</dbReference>
<dbReference type="GO" id="GO:0140662">
    <property type="term" value="F:ATP-dependent protein folding chaperone"/>
    <property type="evidence" value="ECO:0007669"/>
    <property type="project" value="InterPro"/>
</dbReference>
<dbReference type="GO" id="GO:0051082">
    <property type="term" value="F:unfolded protein binding"/>
    <property type="evidence" value="ECO:0007669"/>
    <property type="project" value="InterPro"/>
</dbReference>
<dbReference type="GO" id="GO:0016226">
    <property type="term" value="P:iron-sulfur cluster assembly"/>
    <property type="evidence" value="ECO:0007669"/>
    <property type="project" value="InterPro"/>
</dbReference>
<dbReference type="CDD" id="cd10236">
    <property type="entry name" value="ASKHA_NBD_HSP70_HscA"/>
    <property type="match status" value="1"/>
</dbReference>
<dbReference type="FunFam" id="1.20.1270.10:FF:000006">
    <property type="entry name" value="Chaperone protein HscA"/>
    <property type="match status" value="1"/>
</dbReference>
<dbReference type="FunFam" id="3.30.420.40:FF:000046">
    <property type="entry name" value="Chaperone protein HscA"/>
    <property type="match status" value="1"/>
</dbReference>
<dbReference type="FunFam" id="3.90.640.10:FF:000013">
    <property type="entry name" value="Chaperone protein HscA"/>
    <property type="match status" value="1"/>
</dbReference>
<dbReference type="FunFam" id="2.60.34.10:FF:000005">
    <property type="entry name" value="Chaperone protein HscA homolog"/>
    <property type="match status" value="1"/>
</dbReference>
<dbReference type="Gene3D" id="1.20.1270.10">
    <property type="match status" value="1"/>
</dbReference>
<dbReference type="Gene3D" id="3.30.420.40">
    <property type="match status" value="2"/>
</dbReference>
<dbReference type="Gene3D" id="3.90.640.10">
    <property type="entry name" value="Actin, Chain A, domain 4"/>
    <property type="match status" value="1"/>
</dbReference>
<dbReference type="Gene3D" id="2.60.34.10">
    <property type="entry name" value="Substrate Binding Domain Of DNAk, Chain A, domain 1"/>
    <property type="match status" value="1"/>
</dbReference>
<dbReference type="HAMAP" id="MF_00679">
    <property type="entry name" value="HscA"/>
    <property type="match status" value="1"/>
</dbReference>
<dbReference type="InterPro" id="IPR043129">
    <property type="entry name" value="ATPase_NBD"/>
</dbReference>
<dbReference type="InterPro" id="IPR018181">
    <property type="entry name" value="Heat_shock_70_CS"/>
</dbReference>
<dbReference type="InterPro" id="IPR042039">
    <property type="entry name" value="HscA_NBD"/>
</dbReference>
<dbReference type="InterPro" id="IPR029048">
    <property type="entry name" value="HSP70_C_sf"/>
</dbReference>
<dbReference type="InterPro" id="IPR029047">
    <property type="entry name" value="HSP70_peptide-bd_sf"/>
</dbReference>
<dbReference type="InterPro" id="IPR013126">
    <property type="entry name" value="Hsp_70_fam"/>
</dbReference>
<dbReference type="InterPro" id="IPR010236">
    <property type="entry name" value="ISC_FeS_clus_asmbl_HscA"/>
</dbReference>
<dbReference type="NCBIfam" id="TIGR01991">
    <property type="entry name" value="HscA"/>
    <property type="match status" value="1"/>
</dbReference>
<dbReference type="NCBIfam" id="NF003520">
    <property type="entry name" value="PRK05183.1"/>
    <property type="match status" value="1"/>
</dbReference>
<dbReference type="PANTHER" id="PTHR19375">
    <property type="entry name" value="HEAT SHOCK PROTEIN 70KDA"/>
    <property type="match status" value="1"/>
</dbReference>
<dbReference type="Pfam" id="PF00012">
    <property type="entry name" value="HSP70"/>
    <property type="match status" value="1"/>
</dbReference>
<dbReference type="PRINTS" id="PR00301">
    <property type="entry name" value="HEATSHOCK70"/>
</dbReference>
<dbReference type="SUPFAM" id="SSF53067">
    <property type="entry name" value="Actin-like ATPase domain"/>
    <property type="match status" value="2"/>
</dbReference>
<dbReference type="SUPFAM" id="SSF100934">
    <property type="entry name" value="Heat shock protein 70kD (HSP70), C-terminal subdomain"/>
    <property type="match status" value="1"/>
</dbReference>
<dbReference type="SUPFAM" id="SSF100920">
    <property type="entry name" value="Heat shock protein 70kD (HSP70), peptide-binding domain"/>
    <property type="match status" value="1"/>
</dbReference>
<dbReference type="PROSITE" id="PS00297">
    <property type="entry name" value="HSP70_1"/>
    <property type="match status" value="1"/>
</dbReference>
<dbReference type="PROSITE" id="PS00329">
    <property type="entry name" value="HSP70_2"/>
    <property type="match status" value="1"/>
</dbReference>
<dbReference type="PROSITE" id="PS01036">
    <property type="entry name" value="HSP70_3"/>
    <property type="match status" value="1"/>
</dbReference>
<name>HSCA_SALAR</name>
<feature type="chain" id="PRO_1000082985" description="Chaperone protein HscA">
    <location>
        <begin position="1"/>
        <end position="616"/>
    </location>
</feature>
<keyword id="KW-0067">ATP-binding</keyword>
<keyword id="KW-0143">Chaperone</keyword>
<keyword id="KW-0547">Nucleotide-binding</keyword>
<keyword id="KW-1185">Reference proteome</keyword>
<accession>A9MHJ8</accession>
<gene>
    <name evidence="1" type="primary">hscA</name>
    <name type="ordered locus">SARI_00337</name>
</gene>
<proteinExistence type="inferred from homology"/>
<comment type="function">
    <text evidence="1">Chaperone involved in the maturation of iron-sulfur cluster-containing proteins. Has a low intrinsic ATPase activity which is markedly stimulated by HscB. Involved in the maturation of IscU.</text>
</comment>
<comment type="similarity">
    <text evidence="1">Belongs to the heat shock protein 70 family.</text>
</comment>
<evidence type="ECO:0000255" key="1">
    <source>
        <dbReference type="HAMAP-Rule" id="MF_00679"/>
    </source>
</evidence>
<sequence length="616" mass="65687">MALLQISEPGLSAAPHQRRLAAGIDLGTTNSLVATVRSGQAETLPDHEGRHLLPSVVHYQQQGHTVGYAARDNAAQDTANTISSVKRMMGRSLADIQSRYPHLPYRFQASENGLPMIETAAGLLNPVRVSADILKALAARASESLSGELDGVVITVPAYFDDAQRQGTKDAARLAGLHVLRLLNEPTAAAIAYGLDSGKEGVIAVYDLGGGTFDISILRLSCGVFEVLATGGDSALGGDDFDHLLADYIREQAGIADRSDNRVQRELLDAAIAAKIALSDADTVRVNVAGWQGEITREQFNDLIAALVKRTLLACRRALKDADVDPQEVLEVVMVGGSTRVPLVRERVGEFFGRTPLTAIDPDKVVAIGAAIQADILVGNKPDSEMLLLDVIPLSLGLETMGGLVEKVIPRNTTIPVARAQDFTTFKDGQTAMSIHVMQGERELAQDCRSLARFALRGIPALPAGGAHIRVTFQVDADGLLSVTAMEKSTGIEASIQVKPSYGLTDSEIASMIKDSMSFAEQDVKARMLAEQKVEAARVLESLTGALTADAALLSAAERQCIDDAAAHLNAVAQGDDVDAIEQAIKNVDKQTQEFAARRMDQSVRRALKGHSVDEV</sequence>
<organism>
    <name type="scientific">Salmonella arizonae (strain ATCC BAA-731 / CDC346-86 / RSK2980)</name>
    <dbReference type="NCBI Taxonomy" id="41514"/>
    <lineage>
        <taxon>Bacteria</taxon>
        <taxon>Pseudomonadati</taxon>
        <taxon>Pseudomonadota</taxon>
        <taxon>Gammaproteobacteria</taxon>
        <taxon>Enterobacterales</taxon>
        <taxon>Enterobacteriaceae</taxon>
        <taxon>Salmonella</taxon>
    </lineage>
</organism>
<reference key="1">
    <citation type="submission" date="2007-11" db="EMBL/GenBank/DDBJ databases">
        <authorList>
            <consortium name="The Salmonella enterica serovar Arizonae Genome Sequencing Project"/>
            <person name="McClelland M."/>
            <person name="Sanderson E.K."/>
            <person name="Porwollik S."/>
            <person name="Spieth J."/>
            <person name="Clifton W.S."/>
            <person name="Fulton R."/>
            <person name="Chunyan W."/>
            <person name="Wollam A."/>
            <person name="Shah N."/>
            <person name="Pepin K."/>
            <person name="Bhonagiri V."/>
            <person name="Nash W."/>
            <person name="Johnson M."/>
            <person name="Thiruvilangam P."/>
            <person name="Wilson R."/>
        </authorList>
    </citation>
    <scope>NUCLEOTIDE SEQUENCE [LARGE SCALE GENOMIC DNA]</scope>
    <source>
        <strain>ATCC BAA-731 / CDC346-86 / RSK2980</strain>
    </source>
</reference>
<protein>
    <recommendedName>
        <fullName evidence="1">Chaperone protein HscA</fullName>
    </recommendedName>
    <alternativeName>
        <fullName evidence="1">Hsc66</fullName>
    </alternativeName>
</protein>